<feature type="signal peptide" evidence="3">
    <location>
        <begin position="1"/>
        <end position="21"/>
    </location>
</feature>
<feature type="chain" id="PRO_0000011805" description="Probable xyloglucan endotransglucosylase/hydrolase protein 5">
    <location>
        <begin position="22"/>
        <end position="293"/>
    </location>
</feature>
<feature type="domain" description="GH16" evidence="4">
    <location>
        <begin position="23"/>
        <end position="220"/>
    </location>
</feature>
<feature type="active site" description="Nucleophile" evidence="5">
    <location>
        <position position="106"/>
    </location>
</feature>
<feature type="active site" description="Proton donor" evidence="5">
    <location>
        <position position="110"/>
    </location>
</feature>
<feature type="binding site" evidence="2">
    <location>
        <position position="110"/>
    </location>
    <ligand>
        <name>xyloglucan</name>
        <dbReference type="ChEBI" id="CHEBI:18233"/>
    </ligand>
</feature>
<feature type="binding site" evidence="2">
    <location>
        <begin position="123"/>
        <end position="125"/>
    </location>
    <ligand>
        <name>xyloglucan</name>
        <dbReference type="ChEBI" id="CHEBI:18233"/>
    </ligand>
</feature>
<feature type="binding site" evidence="2">
    <location>
        <begin position="133"/>
        <end position="135"/>
    </location>
    <ligand>
        <name>xyloglucan</name>
        <dbReference type="ChEBI" id="CHEBI:18233"/>
    </ligand>
</feature>
<feature type="binding site" evidence="2">
    <location>
        <begin position="199"/>
        <end position="200"/>
    </location>
    <ligand>
        <name>xyloglucan</name>
        <dbReference type="ChEBI" id="CHEBI:18233"/>
    </ligand>
</feature>
<feature type="binding site" evidence="2">
    <location>
        <position position="204"/>
    </location>
    <ligand>
        <name>xyloglucan</name>
        <dbReference type="ChEBI" id="CHEBI:18233"/>
    </ligand>
</feature>
<feature type="binding site" evidence="2">
    <location>
        <position position="279"/>
    </location>
    <ligand>
        <name>xyloglucan</name>
        <dbReference type="ChEBI" id="CHEBI:18233"/>
    </ligand>
</feature>
<feature type="site" description="Important for catalytic activity" evidence="2">
    <location>
        <position position="108"/>
    </location>
</feature>
<feature type="glycosylation site" description="N-linked (GlcNAc...) asparagine" evidence="3">
    <location>
        <position position="114"/>
    </location>
</feature>
<feature type="disulfide bond" evidence="2">
    <location>
        <begin position="228"/>
        <end position="237"/>
    </location>
</feature>
<feature type="disulfide bond" evidence="2">
    <location>
        <begin position="274"/>
        <end position="287"/>
    </location>
</feature>
<protein>
    <recommendedName>
        <fullName>Probable xyloglucan endotransglucosylase/hydrolase protein 5</fullName>
        <shortName>At-XTH5</shortName>
        <shortName>XTH-5</shortName>
        <ecNumber>2.4.1.207</ecNumber>
    </recommendedName>
</protein>
<keyword id="KW-0052">Apoplast</keyword>
<keyword id="KW-0134">Cell wall</keyword>
<keyword id="KW-0961">Cell wall biogenesis/degradation</keyword>
<keyword id="KW-1015">Disulfide bond</keyword>
<keyword id="KW-0325">Glycoprotein</keyword>
<keyword id="KW-0326">Glycosidase</keyword>
<keyword id="KW-0378">Hydrolase</keyword>
<keyword id="KW-1185">Reference proteome</keyword>
<keyword id="KW-0964">Secreted</keyword>
<keyword id="KW-0732">Signal</keyword>
<keyword id="KW-0808">Transferase</keyword>
<dbReference type="EC" id="2.4.1.207"/>
<dbReference type="EMBL" id="AF163822">
    <property type="protein sequence ID" value="AAD45126.1"/>
    <property type="molecule type" value="Genomic_DNA"/>
</dbReference>
<dbReference type="EMBL" id="AB026486">
    <property type="protein sequence ID" value="BAA81669.1"/>
    <property type="molecule type" value="mRNA"/>
</dbReference>
<dbReference type="EMBL" id="AB005230">
    <property type="protein sequence ID" value="BAB11115.1"/>
    <property type="molecule type" value="Genomic_DNA"/>
</dbReference>
<dbReference type="EMBL" id="CP002688">
    <property type="protein sequence ID" value="AED91952.1"/>
    <property type="molecule type" value="Genomic_DNA"/>
</dbReference>
<dbReference type="EMBL" id="CP002688">
    <property type="protein sequence ID" value="ANM69716.1"/>
    <property type="molecule type" value="Genomic_DNA"/>
</dbReference>
<dbReference type="EMBL" id="CP002688">
    <property type="protein sequence ID" value="ANM69717.1"/>
    <property type="molecule type" value="Genomic_DNA"/>
</dbReference>
<dbReference type="RefSeq" id="NP_001331375.1">
    <property type="nucleotide sequence ID" value="NM_001343298.1"/>
</dbReference>
<dbReference type="RefSeq" id="NP_001331376.1">
    <property type="nucleotide sequence ID" value="NM_001343297.1"/>
</dbReference>
<dbReference type="RefSeq" id="NP_196891.1">
    <property type="nucleotide sequence ID" value="NM_121390.5"/>
</dbReference>
<dbReference type="SMR" id="Q9XIW1"/>
<dbReference type="FunCoup" id="Q9XIW1">
    <property type="interactions" value="71"/>
</dbReference>
<dbReference type="STRING" id="3702.Q9XIW1"/>
<dbReference type="CAZy" id="GH16">
    <property type="family name" value="Glycoside Hydrolase Family 16"/>
</dbReference>
<dbReference type="GlyCosmos" id="Q9XIW1">
    <property type="glycosylation" value="1 site, No reported glycans"/>
</dbReference>
<dbReference type="GlyGen" id="Q9XIW1">
    <property type="glycosylation" value="1 site"/>
</dbReference>
<dbReference type="PaxDb" id="3702-AT5G13870.1"/>
<dbReference type="ProteomicsDB" id="242404"/>
<dbReference type="EnsemblPlants" id="AT5G13870.1">
    <property type="protein sequence ID" value="AT5G13870.1"/>
    <property type="gene ID" value="AT5G13870"/>
</dbReference>
<dbReference type="EnsemblPlants" id="AT5G13870.2">
    <property type="protein sequence ID" value="AT5G13870.2"/>
    <property type="gene ID" value="AT5G13870"/>
</dbReference>
<dbReference type="EnsemblPlants" id="AT5G13870.3">
    <property type="protein sequence ID" value="AT5G13870.3"/>
    <property type="gene ID" value="AT5G13870"/>
</dbReference>
<dbReference type="GeneID" id="831233"/>
<dbReference type="Gramene" id="AT5G13870.1">
    <property type="protein sequence ID" value="AT5G13870.1"/>
    <property type="gene ID" value="AT5G13870"/>
</dbReference>
<dbReference type="Gramene" id="AT5G13870.2">
    <property type="protein sequence ID" value="AT5G13870.2"/>
    <property type="gene ID" value="AT5G13870"/>
</dbReference>
<dbReference type="Gramene" id="AT5G13870.3">
    <property type="protein sequence ID" value="AT5G13870.3"/>
    <property type="gene ID" value="AT5G13870"/>
</dbReference>
<dbReference type="KEGG" id="ath:AT5G13870"/>
<dbReference type="Araport" id="AT5G13870"/>
<dbReference type="TAIR" id="AT5G13870">
    <property type="gene designation" value="XTH5"/>
</dbReference>
<dbReference type="eggNOG" id="ENOG502QQUC">
    <property type="taxonomic scope" value="Eukaryota"/>
</dbReference>
<dbReference type="HOGENOM" id="CLU_048041_0_0_1"/>
<dbReference type="InParanoid" id="Q9XIW1"/>
<dbReference type="OMA" id="RQRFTIY"/>
<dbReference type="OrthoDB" id="4781at2759"/>
<dbReference type="PhylomeDB" id="Q9XIW1"/>
<dbReference type="BioCyc" id="ARA:AT5G13870-MONOMER"/>
<dbReference type="PRO" id="PR:Q9XIW1"/>
<dbReference type="Proteomes" id="UP000006548">
    <property type="component" value="Chromosome 5"/>
</dbReference>
<dbReference type="ExpressionAtlas" id="Q9XIW1">
    <property type="expression patterns" value="baseline and differential"/>
</dbReference>
<dbReference type="GO" id="GO:0048046">
    <property type="term" value="C:apoplast"/>
    <property type="evidence" value="ECO:0007669"/>
    <property type="project" value="UniProtKB-SubCell"/>
</dbReference>
<dbReference type="GO" id="GO:0004553">
    <property type="term" value="F:hydrolase activity, hydrolyzing O-glycosyl compounds"/>
    <property type="evidence" value="ECO:0007669"/>
    <property type="project" value="InterPro"/>
</dbReference>
<dbReference type="GO" id="GO:0030247">
    <property type="term" value="F:polysaccharide binding"/>
    <property type="evidence" value="ECO:0000250"/>
    <property type="project" value="UniProtKB"/>
</dbReference>
<dbReference type="GO" id="GO:0016762">
    <property type="term" value="F:xyloglucan:xyloglucosyl transferase activity"/>
    <property type="evidence" value="ECO:0007669"/>
    <property type="project" value="UniProtKB-EC"/>
</dbReference>
<dbReference type="GO" id="GO:0042546">
    <property type="term" value="P:cell wall biogenesis"/>
    <property type="evidence" value="ECO:0007669"/>
    <property type="project" value="InterPro"/>
</dbReference>
<dbReference type="GO" id="GO:0071555">
    <property type="term" value="P:cell wall organization"/>
    <property type="evidence" value="ECO:0007669"/>
    <property type="project" value="UniProtKB-KW"/>
</dbReference>
<dbReference type="GO" id="GO:0010411">
    <property type="term" value="P:xyloglucan metabolic process"/>
    <property type="evidence" value="ECO:0007669"/>
    <property type="project" value="InterPro"/>
</dbReference>
<dbReference type="CDD" id="cd02176">
    <property type="entry name" value="GH16_XET"/>
    <property type="match status" value="1"/>
</dbReference>
<dbReference type="FunFam" id="2.60.120.200:FF:000025">
    <property type="entry name" value="Xyloglucan endotransglucosylase/hydrolase"/>
    <property type="match status" value="1"/>
</dbReference>
<dbReference type="Gene3D" id="2.60.120.200">
    <property type="match status" value="1"/>
</dbReference>
<dbReference type="InterPro" id="IPR044791">
    <property type="entry name" value="Beta-glucanase/XTH"/>
</dbReference>
<dbReference type="InterPro" id="IPR013320">
    <property type="entry name" value="ConA-like_dom_sf"/>
</dbReference>
<dbReference type="InterPro" id="IPR000757">
    <property type="entry name" value="GH16"/>
</dbReference>
<dbReference type="InterPro" id="IPR008263">
    <property type="entry name" value="GH16_AS"/>
</dbReference>
<dbReference type="InterPro" id="IPR010713">
    <property type="entry name" value="XET_C"/>
</dbReference>
<dbReference type="InterPro" id="IPR016455">
    <property type="entry name" value="XTH"/>
</dbReference>
<dbReference type="PANTHER" id="PTHR31062">
    <property type="entry name" value="XYLOGLUCAN ENDOTRANSGLUCOSYLASE/HYDROLASE PROTEIN 8-RELATED"/>
    <property type="match status" value="1"/>
</dbReference>
<dbReference type="Pfam" id="PF00722">
    <property type="entry name" value="Glyco_hydro_16"/>
    <property type="match status" value="1"/>
</dbReference>
<dbReference type="Pfam" id="PF06955">
    <property type="entry name" value="XET_C"/>
    <property type="match status" value="1"/>
</dbReference>
<dbReference type="PIRSF" id="PIRSF005604">
    <property type="entry name" value="XET"/>
    <property type="match status" value="1"/>
</dbReference>
<dbReference type="SUPFAM" id="SSF49899">
    <property type="entry name" value="Concanavalin A-like lectins/glucanases"/>
    <property type="match status" value="1"/>
</dbReference>
<dbReference type="PROSITE" id="PS01034">
    <property type="entry name" value="GH16_1"/>
    <property type="match status" value="1"/>
</dbReference>
<dbReference type="PROSITE" id="PS51762">
    <property type="entry name" value="GH16_2"/>
    <property type="match status" value="1"/>
</dbReference>
<proteinExistence type="evidence at transcript level"/>
<organism>
    <name type="scientific">Arabidopsis thaliana</name>
    <name type="common">Mouse-ear cress</name>
    <dbReference type="NCBI Taxonomy" id="3702"/>
    <lineage>
        <taxon>Eukaryota</taxon>
        <taxon>Viridiplantae</taxon>
        <taxon>Streptophyta</taxon>
        <taxon>Embryophyta</taxon>
        <taxon>Tracheophyta</taxon>
        <taxon>Spermatophyta</taxon>
        <taxon>Magnoliopsida</taxon>
        <taxon>eudicotyledons</taxon>
        <taxon>Gunneridae</taxon>
        <taxon>Pentapetalae</taxon>
        <taxon>rosids</taxon>
        <taxon>malvids</taxon>
        <taxon>Brassicales</taxon>
        <taxon>Brassicaceae</taxon>
        <taxon>Camelineae</taxon>
        <taxon>Arabidopsis</taxon>
    </lineage>
</organism>
<accession>Q9XIW1</accession>
<gene>
    <name type="primary">XTH5</name>
    <name type="synonym">EXGT-A4</name>
    <name type="synonym">XTR12</name>
    <name type="ordered locus">At5g13870</name>
    <name type="ORF">MAC12.33</name>
</gene>
<reference key="1">
    <citation type="journal article" date="1999" name="Plant Physiol.">
        <title>Expression of endoxyloglucan transferase genes in acaulis mutants of Arabidopsis.</title>
        <authorList>
            <person name="Akamatsu T."/>
            <person name="Hanzawa Y."/>
            <person name="Ohtake Y."/>
            <person name="Takahashi T."/>
            <person name="Nishitani K."/>
            <person name="Komeda Y."/>
        </authorList>
    </citation>
    <scope>NUCLEOTIDE SEQUENCE [GENOMIC DNA]</scope>
    <scope>TISSUE SPECIFICITY</scope>
    <source>
        <strain>cv. Columbia</strain>
    </source>
</reference>
<reference key="2">
    <citation type="submission" date="1999-04" db="EMBL/GenBank/DDBJ databases">
        <title>Endoxyloglucan transferase homologue from Arabidopsis thaliana.</title>
        <authorList>
            <person name="Okamoto S."/>
            <person name="Hayashida N."/>
            <person name="Shinozaki K."/>
            <person name="Nishitani K."/>
        </authorList>
    </citation>
    <scope>NUCLEOTIDE SEQUENCE [MRNA]</scope>
</reference>
<reference key="3">
    <citation type="journal article" date="1997" name="DNA Res.">
        <title>Structural analysis of Arabidopsis thaliana chromosome 5. I. Sequence features of the 1.6 Mb regions covered by twenty physically assigned P1 clones.</title>
        <authorList>
            <person name="Sato S."/>
            <person name="Kotani H."/>
            <person name="Nakamura Y."/>
            <person name="Kaneko T."/>
            <person name="Asamizu E."/>
            <person name="Fukami M."/>
            <person name="Miyajima N."/>
            <person name="Tabata S."/>
        </authorList>
    </citation>
    <scope>NUCLEOTIDE SEQUENCE [LARGE SCALE GENOMIC DNA]</scope>
    <source>
        <strain>cv. Columbia</strain>
    </source>
</reference>
<reference key="4">
    <citation type="journal article" date="2017" name="Plant J.">
        <title>Araport11: a complete reannotation of the Arabidopsis thaliana reference genome.</title>
        <authorList>
            <person name="Cheng C.Y."/>
            <person name="Krishnakumar V."/>
            <person name="Chan A.P."/>
            <person name="Thibaud-Nissen F."/>
            <person name="Schobel S."/>
            <person name="Town C.D."/>
        </authorList>
    </citation>
    <scope>GENOME REANNOTATION</scope>
    <source>
        <strain>cv. Columbia</strain>
    </source>
</reference>
<reference key="5">
    <citation type="journal article" date="2001" name="Plant Cell Physiol.">
        <title>A comprehensive expression analysis of all members of a gene family encoding cell-wall enzymes allowed us to predict cis-regulatory regions involved in cell-wall construction in specific organs of Arabidopsis.</title>
        <authorList>
            <person name="Yokoyama R."/>
            <person name="Nishitani K."/>
        </authorList>
    </citation>
    <scope>TISSUE SPECIFICITY</scope>
    <scope>INDUCTION</scope>
</reference>
<reference key="6">
    <citation type="journal article" date="2002" name="Plant Cell Physiol.">
        <title>The XTH family of enzymes involved in xyloglucan endotransglucosylation and endohydrolysis: current perspectives and a new unifying nomenclature.</title>
        <authorList>
            <person name="Rose J.K.C."/>
            <person name="Braam J."/>
            <person name="Fry S.C."/>
            <person name="Nishitani K."/>
        </authorList>
    </citation>
    <scope>NOMENCLATURE</scope>
</reference>
<sequence length="293" mass="33949">MGRLSSTLCLTFLILATVAFGVPPKKSINVPFGRNYFPTWAFDHIKYLNGGSEVHLVLDKYTGTGFQSKGSYLFGHFSMHIKMVAGDSAGTVTAFYLSSQNSEHDEIDFEFLGNRTGQPYILQTNVFTGGAGNREQRINLWFDPSKDYHSYSVLWNMYQIVFFVDDVPIRVFKNSKDVGVKFPFNQPMKIYSSLWNADDWATRGGLEKTNWEKAPFVASYRGFHVDGCEASVNAKFCETQGKRWWDQKEFQDLDANQYKRLKWVRKRYTIYNYCTDRVRFPVPPPECRRDRDI</sequence>
<name>XTH5_ARATH</name>
<comment type="function">
    <text evidence="1">Catalyzes xyloglucan endohydrolysis (XEH) and/or endotransglycosylation (XET). Cleaves and religates xyloglucan polymers, an essential constituent of the primary cell wall, and thereby participates in cell wall construction of growing tissues (By similarity).</text>
</comment>
<comment type="catalytic activity">
    <reaction>
        <text>breaks a beta-(1-&gt;4) bond in the backbone of a xyloglucan and transfers the xyloglucanyl segment on to O-4 of the non-reducing terminal glucose residue of an acceptor, which can be a xyloglucan or an oligosaccharide of xyloglucan.</text>
        <dbReference type="EC" id="2.4.1.207"/>
    </reaction>
</comment>
<comment type="subcellular location">
    <subcellularLocation>
        <location evidence="8">Secreted</location>
        <location evidence="8">Cell wall</location>
    </subcellularLocation>
    <subcellularLocation>
        <location evidence="8">Secreted</location>
        <location evidence="8">Extracellular space</location>
        <location evidence="8">Apoplast</location>
    </subcellularLocation>
</comment>
<comment type="tissue specificity">
    <text evidence="6 7">Root specific.</text>
</comment>
<comment type="induction">
    <text evidence="7">By brassinolide. Strongly down-regulated by abscisic acid.</text>
</comment>
<comment type="PTM">
    <text evidence="1">Contains at least one intrachain disulfide bond essential for its enzymatic activity.</text>
</comment>
<comment type="similarity">
    <text evidence="8">Belongs to the glycosyl hydrolase 16 family. XTH group 1 subfamily.</text>
</comment>
<evidence type="ECO:0000250" key="1"/>
<evidence type="ECO:0000250" key="2">
    <source>
        <dbReference type="UniProtKB" id="Q8GZD5"/>
    </source>
</evidence>
<evidence type="ECO:0000255" key="3"/>
<evidence type="ECO:0000255" key="4">
    <source>
        <dbReference type="PROSITE-ProRule" id="PRU01098"/>
    </source>
</evidence>
<evidence type="ECO:0000255" key="5">
    <source>
        <dbReference type="PROSITE-ProRule" id="PRU10064"/>
    </source>
</evidence>
<evidence type="ECO:0000269" key="6">
    <source>
    </source>
</evidence>
<evidence type="ECO:0000269" key="7">
    <source>
    </source>
</evidence>
<evidence type="ECO:0000305" key="8"/>